<feature type="chain" id="PRO_0000064448" description="SAGA complex subunit NGG1">
    <location>
        <begin position="1"/>
        <end position="702"/>
    </location>
</feature>
<feature type="region of interest" description="Disordered" evidence="2">
    <location>
        <begin position="1"/>
        <end position="29"/>
    </location>
</feature>
<feature type="region of interest" description="Disordered" evidence="2">
    <location>
        <begin position="90"/>
        <end position="224"/>
    </location>
</feature>
<feature type="region of interest" description="Disordered" evidence="2">
    <location>
        <begin position="611"/>
        <end position="636"/>
    </location>
</feature>
<feature type="region of interest" description="Disordered" evidence="2">
    <location>
        <begin position="672"/>
        <end position="702"/>
    </location>
</feature>
<feature type="short sequence motif" description="Nuclear localization signal" evidence="1">
    <location>
        <begin position="606"/>
        <end position="618"/>
    </location>
</feature>
<feature type="compositionally biased region" description="Basic residues" evidence="2">
    <location>
        <begin position="1"/>
        <end position="10"/>
    </location>
</feature>
<feature type="compositionally biased region" description="Basic and acidic residues" evidence="2">
    <location>
        <begin position="11"/>
        <end position="22"/>
    </location>
</feature>
<feature type="compositionally biased region" description="Basic and acidic residues" evidence="2">
    <location>
        <begin position="90"/>
        <end position="108"/>
    </location>
</feature>
<feature type="compositionally biased region" description="Polar residues" evidence="2">
    <location>
        <begin position="109"/>
        <end position="125"/>
    </location>
</feature>
<feature type="compositionally biased region" description="Basic and acidic residues" evidence="2">
    <location>
        <begin position="162"/>
        <end position="219"/>
    </location>
</feature>
<feature type="compositionally biased region" description="Polar residues" evidence="2">
    <location>
        <begin position="620"/>
        <end position="636"/>
    </location>
</feature>
<feature type="compositionally biased region" description="Acidic residues" evidence="2">
    <location>
        <begin position="680"/>
        <end position="689"/>
    </location>
</feature>
<feature type="modified residue" description="Phosphoserine" evidence="21 22 23">
    <location>
        <position position="134"/>
    </location>
</feature>
<feature type="modified residue" description="Phosphoserine" evidence="22">
    <location>
        <position position="407"/>
    </location>
</feature>
<feature type="modified residue" description="Phosphothreonine" evidence="23">
    <location>
        <position position="464"/>
    </location>
</feature>
<feature type="sequence conflict" description="In Ref. 2; AAA03542." evidence="20" ref="2">
    <original>K</original>
    <variation>M</variation>
    <location>
        <position position="520"/>
    </location>
</feature>
<sequence>MPRHGRRGKLPKGEKLPKKEGGDNTPSKLLSSMLKTLDLTFERDIGMLNGKSVRSIPNKKTLLELQSQLDSLNEILGTIARGDQETIEALRKIRDSKNEKQANDEKQETSNADGQHESSTATEETNIIDKGVQSPPKPPPSNEISGTIENDVESIKQAADNMAKEEINEDKDLQVHRDQPREKRPFDSETENRATENENTQRPDNKKQKIDVDKMENDPTVKNPKSEFVVSQTLPRAAAALGLFNEEGLESTGEDFLKKKYNVASYPTNDLKDLLPGELPDMDFSHPKPTNQIQFNTFLAFVENFFKDLSDDNLKFLKMKYIIPDSLQFDKTYDPEVNPFIIPKLGPLYTDVWFKDENDKNSAYKKPSPYSNDASTILPKKSANELDDNALESGSISCGPLLSRLLSAVLKDDNDKSELQSSKIIRDGGLPRTGGEDDIQSFRNNNNDTVDMTLSQENGPSVQTPDNDIDEEASFQAKLAENKGSNGGTTSTLPQQIGWITNGINLDYPTFEERLKRELKYVGIYMNLPKDENNPNSDDPDWVTGREDDEISAELRELQGTLKQVTKKNQKRKAQLIPLVERQLAWQEYSSILEDLDKQIDQAYVKRIRVPKKRKKHHTAASNNVNTGTTSQIAQQKAANSSLKSLLDKRQRWINKIGPLFDKPEIMKRIPNESVFKDMDQEEDEDEADVFAQNTNKDVELN</sequence>
<proteinExistence type="evidence at protein level"/>
<evidence type="ECO:0000255" key="1"/>
<evidence type="ECO:0000256" key="2">
    <source>
        <dbReference type="SAM" id="MobiDB-lite"/>
    </source>
</evidence>
<evidence type="ECO:0000269" key="3">
    <source>
    </source>
</evidence>
<evidence type="ECO:0000269" key="4">
    <source>
    </source>
</evidence>
<evidence type="ECO:0000269" key="5">
    <source>
    </source>
</evidence>
<evidence type="ECO:0000269" key="6">
    <source>
    </source>
</evidence>
<evidence type="ECO:0000269" key="7">
    <source>
    </source>
</evidence>
<evidence type="ECO:0000269" key="8">
    <source>
    </source>
</evidence>
<evidence type="ECO:0000269" key="9">
    <source>
    </source>
</evidence>
<evidence type="ECO:0000269" key="10">
    <source>
    </source>
</evidence>
<evidence type="ECO:0000269" key="11">
    <source>
    </source>
</evidence>
<evidence type="ECO:0000269" key="12">
    <source>
    </source>
</evidence>
<evidence type="ECO:0000269" key="13">
    <source>
    </source>
</evidence>
<evidence type="ECO:0000269" key="14">
    <source>
    </source>
</evidence>
<evidence type="ECO:0000269" key="15">
    <source>
    </source>
</evidence>
<evidence type="ECO:0000269" key="16">
    <source>
    </source>
</evidence>
<evidence type="ECO:0000269" key="17">
    <source>
    </source>
</evidence>
<evidence type="ECO:0000269" key="18">
    <source>
    </source>
</evidence>
<evidence type="ECO:0000269" key="19">
    <source>
    </source>
</evidence>
<evidence type="ECO:0000305" key="20"/>
<evidence type="ECO:0007744" key="21">
    <source>
    </source>
</evidence>
<evidence type="ECO:0007744" key="22">
    <source>
    </source>
</evidence>
<evidence type="ECO:0007744" key="23">
    <source>
    </source>
</evidence>
<accession>P32494</accession>
<accession>D6VSF8</accession>
<name>NGG1_YEAST</name>
<protein>
    <recommendedName>
        <fullName>SAGA complex subunit NGG1</fullName>
    </recommendedName>
    <alternativeName>
        <fullName>Chromatin-remodeling complexes subunit NGG1</fullName>
    </alternativeName>
    <alternativeName>
        <fullName>Transcriptional adapter 3</fullName>
    </alternativeName>
</protein>
<organism>
    <name type="scientific">Saccharomyces cerevisiae (strain ATCC 204508 / S288c)</name>
    <name type="common">Baker's yeast</name>
    <dbReference type="NCBI Taxonomy" id="559292"/>
    <lineage>
        <taxon>Eukaryota</taxon>
        <taxon>Fungi</taxon>
        <taxon>Dikarya</taxon>
        <taxon>Ascomycota</taxon>
        <taxon>Saccharomycotina</taxon>
        <taxon>Saccharomycetes</taxon>
        <taxon>Saccharomycetales</taxon>
        <taxon>Saccharomycetaceae</taxon>
        <taxon>Saccharomyces</taxon>
    </lineage>
</organism>
<dbReference type="EMBL" id="L12137">
    <property type="protein sequence ID" value="AAA21684.1"/>
    <property type="molecule type" value="Genomic_DNA"/>
</dbReference>
<dbReference type="EMBL" id="L21189">
    <property type="protein sequence ID" value="AAA03542.1"/>
    <property type="status" value="ALT_SEQ"/>
    <property type="molecule type" value="Unassigned_DNA"/>
</dbReference>
<dbReference type="EMBL" id="Z46727">
    <property type="protein sequence ID" value="CAA86681.1"/>
    <property type="molecule type" value="Genomic_DNA"/>
</dbReference>
<dbReference type="EMBL" id="BK006938">
    <property type="protein sequence ID" value="DAA12018.1"/>
    <property type="molecule type" value="Genomic_DNA"/>
</dbReference>
<dbReference type="PIR" id="S41685">
    <property type="entry name" value="S41685"/>
</dbReference>
<dbReference type="RefSeq" id="NP_010461.3">
    <property type="nucleotide sequence ID" value="NM_001180483.3"/>
</dbReference>
<dbReference type="BioGRID" id="32229">
    <property type="interactions" value="183"/>
</dbReference>
<dbReference type="ComplexPortal" id="CPX-608">
    <property type="entry name" value="ADA complex"/>
</dbReference>
<dbReference type="ComplexPortal" id="CPX-656">
    <property type="entry name" value="SAGA complex"/>
</dbReference>
<dbReference type="ComplexPortal" id="CPX-675">
    <property type="entry name" value="SLIK (SAGA-like) complex"/>
</dbReference>
<dbReference type="DIP" id="DIP-774N"/>
<dbReference type="FunCoup" id="P32494">
    <property type="interactions" value="523"/>
</dbReference>
<dbReference type="IntAct" id="P32494">
    <property type="interactions" value="41"/>
</dbReference>
<dbReference type="MINT" id="P32494"/>
<dbReference type="STRING" id="4932.YDR176W"/>
<dbReference type="iPTMnet" id="P32494"/>
<dbReference type="PaxDb" id="4932-YDR176W"/>
<dbReference type="PeptideAtlas" id="P32494"/>
<dbReference type="DNASU" id="851756"/>
<dbReference type="EnsemblFungi" id="YDR176W_mRNA">
    <property type="protein sequence ID" value="YDR176W"/>
    <property type="gene ID" value="YDR176W"/>
</dbReference>
<dbReference type="GeneID" id="851756"/>
<dbReference type="KEGG" id="sce:YDR176W"/>
<dbReference type="AGR" id="SGD:S000002583"/>
<dbReference type="SGD" id="S000002583">
    <property type="gene designation" value="NGG1"/>
</dbReference>
<dbReference type="VEuPathDB" id="FungiDB:YDR176W"/>
<dbReference type="eggNOG" id="KOG4191">
    <property type="taxonomic scope" value="Eukaryota"/>
</dbReference>
<dbReference type="GeneTree" id="ENSGT00390000008947"/>
<dbReference type="HOGENOM" id="CLU_016102_1_0_1"/>
<dbReference type="InParanoid" id="P32494"/>
<dbReference type="OMA" id="WQEYSSI"/>
<dbReference type="OrthoDB" id="1232at2759"/>
<dbReference type="BioCyc" id="YEAST:G3O-29765-MONOMER"/>
<dbReference type="Reactome" id="R-SCE-5689880">
    <property type="pathway name" value="Ub-specific processing proteases"/>
</dbReference>
<dbReference type="BioGRID-ORCS" id="851756">
    <property type="hits" value="0 hits in 10 CRISPR screens"/>
</dbReference>
<dbReference type="PRO" id="PR:P32494"/>
<dbReference type="Proteomes" id="UP000002311">
    <property type="component" value="Chromosome IV"/>
</dbReference>
<dbReference type="RNAct" id="P32494">
    <property type="molecule type" value="protein"/>
</dbReference>
<dbReference type="GO" id="GO:0140671">
    <property type="term" value="C:ADA complex"/>
    <property type="evidence" value="ECO:0000314"/>
    <property type="project" value="SGD"/>
</dbReference>
<dbReference type="GO" id="GO:0005634">
    <property type="term" value="C:nucleus"/>
    <property type="evidence" value="ECO:0000303"/>
    <property type="project" value="ComplexPortal"/>
</dbReference>
<dbReference type="GO" id="GO:0000124">
    <property type="term" value="C:SAGA complex"/>
    <property type="evidence" value="ECO:0000314"/>
    <property type="project" value="SGD"/>
</dbReference>
<dbReference type="GO" id="GO:0046695">
    <property type="term" value="C:SLIK (SAGA-like) complex"/>
    <property type="evidence" value="ECO:0000314"/>
    <property type="project" value="SGD"/>
</dbReference>
<dbReference type="GO" id="GO:0003713">
    <property type="term" value="F:transcription coactivator activity"/>
    <property type="evidence" value="ECO:0000318"/>
    <property type="project" value="GO_Central"/>
</dbReference>
<dbReference type="GO" id="GO:0006325">
    <property type="term" value="P:chromatin organization"/>
    <property type="evidence" value="ECO:0000314"/>
    <property type="project" value="SGD"/>
</dbReference>
<dbReference type="GO" id="GO:0006338">
    <property type="term" value="P:chromatin remodeling"/>
    <property type="evidence" value="ECO:0007669"/>
    <property type="project" value="GOC"/>
</dbReference>
<dbReference type="GO" id="GO:0006357">
    <property type="term" value="P:regulation of transcription by RNA polymerase II"/>
    <property type="evidence" value="ECO:0000314"/>
    <property type="project" value="ComplexPortal"/>
</dbReference>
<dbReference type="InterPro" id="IPR019340">
    <property type="entry name" value="Histone_AcTrfase_su3"/>
</dbReference>
<dbReference type="PANTHER" id="PTHR13556:SF2">
    <property type="entry name" value="TRANSCRIPTIONAL ADAPTER 3"/>
    <property type="match status" value="1"/>
</dbReference>
<dbReference type="PANTHER" id="PTHR13556">
    <property type="entry name" value="TRANSCRIPTIONAL ADAPTER 3-RELATED"/>
    <property type="match status" value="1"/>
</dbReference>
<dbReference type="Pfam" id="PF10198">
    <property type="entry name" value="Ada3"/>
    <property type="match status" value="1"/>
</dbReference>
<reference key="1">
    <citation type="journal article" date="1993" name="EMBO J.">
        <title>Characterization of NGG1, a novel yeast gene required for glucose repression of GAL4p-regulated transcription.</title>
        <authorList>
            <person name="Brandl C.J."/>
            <person name="Furlanetto A.M."/>
            <person name="Martens J.A."/>
            <person name="Hamilton K.S."/>
        </authorList>
    </citation>
    <scope>NUCLEOTIDE SEQUENCE [GENOMIC DNA]</scope>
</reference>
<reference key="2">
    <citation type="journal article" date="1993" name="Mol. Cell. Biol.">
        <title>ADA3: a gene, identified by resistance to GAL4-VP16, with properties similar to and different from those of ADA2.</title>
        <authorList>
            <person name="Pina B."/>
            <person name="Berger S.L."/>
            <person name="Marcus G.A."/>
            <person name="Silverman N."/>
            <person name="Agapite J."/>
            <person name="Guarente L."/>
        </authorList>
    </citation>
    <scope>NUCLEOTIDE SEQUENCE</scope>
</reference>
<reference key="3">
    <citation type="journal article" date="1997" name="Nature">
        <title>The nucleotide sequence of Saccharomyces cerevisiae chromosome IV.</title>
        <authorList>
            <person name="Jacq C."/>
            <person name="Alt-Moerbe J."/>
            <person name="Andre B."/>
            <person name="Arnold W."/>
            <person name="Bahr A."/>
            <person name="Ballesta J.P.G."/>
            <person name="Bargues M."/>
            <person name="Baron L."/>
            <person name="Becker A."/>
            <person name="Biteau N."/>
            <person name="Bloecker H."/>
            <person name="Blugeon C."/>
            <person name="Boskovic J."/>
            <person name="Brandt P."/>
            <person name="Brueckner M."/>
            <person name="Buitrago M.J."/>
            <person name="Coster F."/>
            <person name="Delaveau T."/>
            <person name="del Rey F."/>
            <person name="Dujon B."/>
            <person name="Eide L.G."/>
            <person name="Garcia-Cantalejo J.M."/>
            <person name="Goffeau A."/>
            <person name="Gomez-Peris A."/>
            <person name="Granotier C."/>
            <person name="Hanemann V."/>
            <person name="Hankeln T."/>
            <person name="Hoheisel J.D."/>
            <person name="Jaeger W."/>
            <person name="Jimenez A."/>
            <person name="Jonniaux J.-L."/>
            <person name="Kraemer C."/>
            <person name="Kuester H."/>
            <person name="Laamanen P."/>
            <person name="Legros Y."/>
            <person name="Louis E.J."/>
            <person name="Moeller-Rieker S."/>
            <person name="Monnet A."/>
            <person name="Moro M."/>
            <person name="Mueller-Auer S."/>
            <person name="Nussbaumer B."/>
            <person name="Paricio N."/>
            <person name="Paulin L."/>
            <person name="Perea J."/>
            <person name="Perez-Alonso M."/>
            <person name="Perez-Ortin J.E."/>
            <person name="Pohl T.M."/>
            <person name="Prydz H."/>
            <person name="Purnelle B."/>
            <person name="Rasmussen S.W."/>
            <person name="Remacha M.A."/>
            <person name="Revuelta J.L."/>
            <person name="Rieger M."/>
            <person name="Salom D."/>
            <person name="Saluz H.P."/>
            <person name="Saiz J.E."/>
            <person name="Saren A.-M."/>
            <person name="Schaefer M."/>
            <person name="Scharfe M."/>
            <person name="Schmidt E.R."/>
            <person name="Schneider C."/>
            <person name="Scholler P."/>
            <person name="Schwarz S."/>
            <person name="Soler-Mira A."/>
            <person name="Urrestarazu L.A."/>
            <person name="Verhasselt P."/>
            <person name="Vissers S."/>
            <person name="Voet M."/>
            <person name="Volckaert G."/>
            <person name="Wagner G."/>
            <person name="Wambutt R."/>
            <person name="Wedler E."/>
            <person name="Wedler H."/>
            <person name="Woelfl S."/>
            <person name="Harris D.E."/>
            <person name="Bowman S."/>
            <person name="Brown D."/>
            <person name="Churcher C.M."/>
            <person name="Connor R."/>
            <person name="Dedman K."/>
            <person name="Gentles S."/>
            <person name="Hamlin N."/>
            <person name="Hunt S."/>
            <person name="Jones L."/>
            <person name="McDonald S."/>
            <person name="Murphy L.D."/>
            <person name="Niblett D."/>
            <person name="Odell C."/>
            <person name="Oliver K."/>
            <person name="Rajandream M.A."/>
            <person name="Richards C."/>
            <person name="Shore L."/>
            <person name="Walsh S.V."/>
            <person name="Barrell B.G."/>
            <person name="Dietrich F.S."/>
            <person name="Mulligan J.T."/>
            <person name="Allen E."/>
            <person name="Araujo R."/>
            <person name="Aviles E."/>
            <person name="Berno A."/>
            <person name="Carpenter J."/>
            <person name="Chen E."/>
            <person name="Cherry J.M."/>
            <person name="Chung E."/>
            <person name="Duncan M."/>
            <person name="Hunicke-Smith S."/>
            <person name="Hyman R.W."/>
            <person name="Komp C."/>
            <person name="Lashkari D."/>
            <person name="Lew H."/>
            <person name="Lin D."/>
            <person name="Mosedale D."/>
            <person name="Nakahara K."/>
            <person name="Namath A."/>
            <person name="Oefner P."/>
            <person name="Oh C."/>
            <person name="Petel F.X."/>
            <person name="Roberts D."/>
            <person name="Schramm S."/>
            <person name="Schroeder M."/>
            <person name="Shogren T."/>
            <person name="Shroff N."/>
            <person name="Winant A."/>
            <person name="Yelton M.A."/>
            <person name="Botstein D."/>
            <person name="Davis R.W."/>
            <person name="Johnston M."/>
            <person name="Andrews S."/>
            <person name="Brinkman R."/>
            <person name="Cooper J."/>
            <person name="Ding H."/>
            <person name="Du Z."/>
            <person name="Favello A."/>
            <person name="Fulton L."/>
            <person name="Gattung S."/>
            <person name="Greco T."/>
            <person name="Hallsworth K."/>
            <person name="Hawkins J."/>
            <person name="Hillier L.W."/>
            <person name="Jier M."/>
            <person name="Johnson D."/>
            <person name="Johnston L."/>
            <person name="Kirsten J."/>
            <person name="Kucaba T."/>
            <person name="Langston Y."/>
            <person name="Latreille P."/>
            <person name="Le T."/>
            <person name="Mardis E."/>
            <person name="Menezes S."/>
            <person name="Miller N."/>
            <person name="Nhan M."/>
            <person name="Pauley A."/>
            <person name="Peluso D."/>
            <person name="Rifkin L."/>
            <person name="Riles L."/>
            <person name="Taich A."/>
            <person name="Trevaskis E."/>
            <person name="Vignati D."/>
            <person name="Wilcox L."/>
            <person name="Wohldman P."/>
            <person name="Vaudin M."/>
            <person name="Wilson R."/>
            <person name="Waterston R."/>
            <person name="Albermann K."/>
            <person name="Hani J."/>
            <person name="Heumann K."/>
            <person name="Kleine K."/>
            <person name="Mewes H.-W."/>
            <person name="Zollner A."/>
            <person name="Zaccaria P."/>
        </authorList>
    </citation>
    <scope>NUCLEOTIDE SEQUENCE [LARGE SCALE GENOMIC DNA]</scope>
    <source>
        <strain>ATCC 204508 / S288c</strain>
    </source>
</reference>
<reference key="4">
    <citation type="journal article" date="2014" name="G3 (Bethesda)">
        <title>The reference genome sequence of Saccharomyces cerevisiae: Then and now.</title>
        <authorList>
            <person name="Engel S.R."/>
            <person name="Dietrich F.S."/>
            <person name="Fisk D.G."/>
            <person name="Binkley G."/>
            <person name="Balakrishnan R."/>
            <person name="Costanzo M.C."/>
            <person name="Dwight S.S."/>
            <person name="Hitz B.C."/>
            <person name="Karra K."/>
            <person name="Nash R.S."/>
            <person name="Weng S."/>
            <person name="Wong E.D."/>
            <person name="Lloyd P."/>
            <person name="Skrzypek M.S."/>
            <person name="Miyasato S.R."/>
            <person name="Simison M."/>
            <person name="Cherry J.M."/>
        </authorList>
    </citation>
    <scope>GENOME REANNOTATION</scope>
    <source>
        <strain>ATCC 204508 / S288c</strain>
    </source>
</reference>
<reference key="5">
    <citation type="journal article" date="1995" name="Mol. Cell. Biol.">
        <title>ADA3, a putative transcriptional adaptor, consists of two separable domains and interacts with ADA2 and GCN5 in a trimeric complex.</title>
        <authorList>
            <person name="Horiuchi J."/>
            <person name="Silverman N."/>
            <person name="Marcus G.A."/>
            <person name="Guarente L."/>
        </authorList>
    </citation>
    <scope>SUBUNIT</scope>
</reference>
<reference key="6">
    <citation type="journal article" date="1997" name="Mol. Cell. Biol.">
        <title>ADA1, a novel component of the ADA/GCN5 complex, has broader effects than GCN5, ADA2, or ADA3.</title>
        <authorList>
            <person name="Horiuchi J."/>
            <person name="Silverman N."/>
            <person name="Pina B."/>
            <person name="Marcus G.A."/>
            <person name="Guarente L."/>
        </authorList>
    </citation>
    <scope>IDENTIFICATION IN THE ADA/GCN5 COMPLEX</scope>
    <source>
        <strain>ATCC MYA-3516 / BWG1-7A</strain>
    </source>
</reference>
<reference key="7">
    <citation type="journal article" date="1998" name="Cell">
        <title>A subset of TAF(II)s are integral components of the SAGA complex required for nucleosome acetylation and transcriptional stimulation.</title>
        <authorList>
            <person name="Grant P.A."/>
            <person name="Schieltz D."/>
            <person name="Pray-Grant M.G."/>
            <person name="Steger D.J."/>
            <person name="Reese J.C."/>
            <person name="Yates J.R. III"/>
            <person name="Workman J.L."/>
        </authorList>
    </citation>
    <scope>IDENTIFICATION IN THE SAGA COMPLEX</scope>
    <scope>IDENTIFICATION BY MASS SPECTROMETRY</scope>
</reference>
<reference key="8">
    <citation type="journal article" date="1998" name="J. Biol. Chem.">
        <title>Tra1p is a component of the yeast Ada.Spt transcriptional regulatory complexes.</title>
        <authorList>
            <person name="Saleh A."/>
            <person name="Schieltz D."/>
            <person name="Ting N."/>
            <person name="McMahon S.B."/>
            <person name="Litchfield D.W."/>
            <person name="Yates J.R. III"/>
            <person name="Lees-Miller S.P."/>
            <person name="Cole M.D."/>
            <person name="Brandl C.J."/>
        </authorList>
    </citation>
    <scope>IDENTIFICATION IN A COMPLEX WITH TRA1 AND SPT7</scope>
</reference>
<reference key="9">
    <citation type="journal article" date="1998" name="Mol. Cell">
        <title>The ATM-related cofactor Tra1 is a component of the purified SAGA complex.</title>
        <authorList>
            <person name="Grant P.A."/>
            <person name="Schieltz D."/>
            <person name="Pray-Grant M.G."/>
            <person name="Yates J.R. III"/>
            <person name="Workman J.L."/>
        </authorList>
    </citation>
    <scope>IDENTIFICATION IN A SAGA COMPLEX WITH SPT7; HFI1; SPT8; GCN5; SPT20; SPT2; ADA2 AND TRA1</scope>
</reference>
<reference key="10">
    <citation type="journal article" date="1999" name="J. Biol. Chem.">
        <title>Expanded lysine acetylation specificity of Gcn5 in native complexes.</title>
        <authorList>
            <person name="Grant P.A."/>
            <person name="Eberharter A."/>
            <person name="John S."/>
            <person name="Cook R.G."/>
            <person name="Turner B.M."/>
            <person name="Workman J.L."/>
        </authorList>
    </citation>
    <scope>FUNCTION IN HISTONE ACETYLATION AT THE SAGA COMPLEX</scope>
    <scope>FUNCTION IN HISTONE ACETYLATION AT THE ADA COMPLEX</scope>
</reference>
<reference key="11">
    <citation type="journal article" date="1999" name="Mol. Cell. Biol.">
        <title>The ADA complex is a distinct histone acetyltransferase complex in Saccharomyces cerevisiae.</title>
        <authorList>
            <person name="Eberharter A."/>
            <person name="Sterner D.E."/>
            <person name="Schieltz D."/>
            <person name="Hassan A."/>
            <person name="Yates J.R. III"/>
            <person name="Berger S.L."/>
            <person name="Workman J.L."/>
        </authorList>
    </citation>
    <scope>IDENTIFICATION IN THE ADA COMPLEX</scope>
    <scope>IDENTIFICATION BY MASS SPECTROMETRY</scope>
</reference>
<reference key="12">
    <citation type="journal article" date="2000" name="Nature">
        <title>Redundant roles for the TFIID and SAGA complexes in global transcription.</title>
        <authorList>
            <person name="Lee T.I."/>
            <person name="Causton H.C."/>
            <person name="Holstege F.C."/>
            <person name="Shen W.C."/>
            <person name="Hannett N."/>
            <person name="Jennings E.G."/>
            <person name="Winston F."/>
            <person name="Green M.R."/>
            <person name="Young R.A."/>
        </authorList>
    </citation>
    <scope>FUNCTION</scope>
</reference>
<reference key="13">
    <citation type="journal article" date="2002" name="Mol. Cell. Biol.">
        <title>The novel SLIK histone acetyltransferase complex functions in the yeast retrograde response pathway.</title>
        <authorList>
            <person name="Pray-Grant M.G."/>
            <person name="Schieltz D."/>
            <person name="McMahon S.J."/>
            <person name="Wood J.M."/>
            <person name="Kennedy E.L."/>
            <person name="Cook R.G."/>
            <person name="Workman J.L."/>
            <person name="Yates J.R. III"/>
            <person name="Grant P.A."/>
        </authorList>
    </citation>
    <scope>IDENTIFICATION IN THE SLIK COMPLEX</scope>
</reference>
<reference key="14">
    <citation type="journal article" date="2002" name="Proc. Natl. Acad. Sci. U.S.A.">
        <title>SALSA, a variant of yeast SAGA, contains truncated Spt7, which correlates with activated transcription.</title>
        <authorList>
            <person name="Sterner D.E."/>
            <person name="Belotserkovskaya R."/>
            <person name="Berger S.L."/>
        </authorList>
    </citation>
    <scope>IDENTIFICATION IN THE SALSA COMPLEX</scope>
</reference>
<reference key="15">
    <citation type="journal article" date="2003" name="Nature">
        <title>Global analysis of protein expression in yeast.</title>
        <authorList>
            <person name="Ghaemmaghami S."/>
            <person name="Huh W.-K."/>
            <person name="Bower K."/>
            <person name="Howson R.W."/>
            <person name="Belle A."/>
            <person name="Dephoure N."/>
            <person name="O'Shea E.K."/>
            <person name="Weissman J.S."/>
        </authorList>
    </citation>
    <scope>LEVEL OF PROTEIN EXPRESSION [LARGE SCALE ANALYSIS]</scope>
</reference>
<reference key="16">
    <citation type="journal article" date="2004" name="Mol. Cell. Biol.">
        <title>Drosophila Ada2b is required for viability and normal histone H3 acetylation.</title>
        <authorList>
            <person name="Qi D."/>
            <person name="Larsson J."/>
            <person name="Mannervik M."/>
        </authorList>
    </citation>
    <scope>FUNCTION</scope>
    <scope>DISRUPTION PHENOTYPE</scope>
</reference>
<reference key="17">
    <citation type="journal article" date="2005" name="Nature">
        <title>Chd1 chromodomain links histone H3 methylation with SAGA- and SLIK-dependent acetylation.</title>
        <authorList>
            <person name="Pray-Grant M.G."/>
            <person name="Daniel J.A."/>
            <person name="Schieltz D."/>
            <person name="Yates J.R. III"/>
            <person name="Grant P.A."/>
        </authorList>
    </citation>
    <scope>IDENTIFICATION IN THE SLIK COMPLEX</scope>
</reference>
<reference key="18">
    <citation type="journal article" date="2007" name="J. Proteome Res.">
        <title>Large-scale phosphorylation analysis of alpha-factor-arrested Saccharomyces cerevisiae.</title>
        <authorList>
            <person name="Li X."/>
            <person name="Gerber S.A."/>
            <person name="Rudner A.D."/>
            <person name="Beausoleil S.A."/>
            <person name="Haas W."/>
            <person name="Villen J."/>
            <person name="Elias J.E."/>
            <person name="Gygi S.P."/>
        </authorList>
    </citation>
    <scope>PHOSPHORYLATION [LARGE SCALE ANALYSIS] AT SER-134</scope>
    <scope>IDENTIFICATION BY MASS SPECTROMETRY [LARGE SCALE ANALYSIS]</scope>
    <source>
        <strain>ADR376</strain>
    </source>
</reference>
<reference key="19">
    <citation type="journal article" date="2008" name="Mol. Cell. Proteomics">
        <title>A multidimensional chromatography technology for in-depth phosphoproteome analysis.</title>
        <authorList>
            <person name="Albuquerque C.P."/>
            <person name="Smolka M.B."/>
            <person name="Payne S.H."/>
            <person name="Bafna V."/>
            <person name="Eng J."/>
            <person name="Zhou H."/>
        </authorList>
    </citation>
    <scope>PHOSPHORYLATION [LARGE SCALE ANALYSIS] AT SER-134 AND SER-407</scope>
    <scope>IDENTIFICATION BY MASS SPECTROMETRY [LARGE SCALE ANALYSIS]</scope>
</reference>
<reference key="20">
    <citation type="journal article" date="2009" name="Science">
        <title>Global analysis of Cdk1 substrate phosphorylation sites provides insights into evolution.</title>
        <authorList>
            <person name="Holt L.J."/>
            <person name="Tuch B.B."/>
            <person name="Villen J."/>
            <person name="Johnson A.D."/>
            <person name="Gygi S.P."/>
            <person name="Morgan D.O."/>
        </authorList>
    </citation>
    <scope>PHOSPHORYLATION [LARGE SCALE ANALYSIS] AT SER-134 AND THR-464</scope>
    <scope>IDENTIFICATION BY MASS SPECTROMETRY [LARGE SCALE ANALYSIS]</scope>
</reference>
<reference key="21">
    <citation type="journal article" date="2011" name="Mol. Syst. Biol.">
        <title>Combinatorial depletion analysis to assemble the network architecture of the SAGA and ADA chromatin remodeling complexes.</title>
        <authorList>
            <person name="Lee K.K."/>
            <person name="Sardiu M.E."/>
            <person name="Swanson S.K."/>
            <person name="Gilmore J.M."/>
            <person name="Torok M."/>
            <person name="Grant P.A."/>
            <person name="Florens L."/>
            <person name="Workman J.L."/>
            <person name="Washburn M.P."/>
        </authorList>
    </citation>
    <scope>SUBUNIT</scope>
    <scope>SUBCELLULAR LOCATION</scope>
</reference>
<reference key="22">
    <citation type="journal article" date="2014" name="EMBO J.">
        <title>Architecture of the Saccharomyces cerevisiae SAGA transcription coactivator complex.</title>
        <authorList>
            <person name="Han Y."/>
            <person name="Luo J."/>
            <person name="Ranish J."/>
            <person name="Hahn S."/>
        </authorList>
    </citation>
    <scope>SUBUNIT</scope>
</reference>
<reference key="23">
    <citation type="journal article" date="2017" name="Mol. Cell">
        <title>SAGA is a general cofactor for RNA polymerase II transcription.</title>
        <authorList>
            <person name="Baptista T."/>
            <person name="Gruenberg S."/>
            <person name="Minoungou N."/>
            <person name="Koster M.J.E."/>
            <person name="Timmers H.T.M."/>
            <person name="Hahn S."/>
            <person name="Devys D."/>
            <person name="Tora L."/>
        </authorList>
    </citation>
    <scope>FUNCTION</scope>
</reference>
<reference key="24">
    <citation type="journal article" date="2021" name="J. Biol. Chem.">
        <title>SAGA and SAGA-like SLIK transcriptional coactivators are structurally and biochemically equivalent.</title>
        <authorList>
            <person name="Adamus K."/>
            <person name="Reboul C."/>
            <person name="Voss J."/>
            <person name="Huang C."/>
            <person name="Schittenhelm R.B."/>
            <person name="Le S.N."/>
            <person name="Ellisdon A.M."/>
            <person name="Elmlund H."/>
            <person name="Boudes M."/>
            <person name="Elmlund D."/>
        </authorList>
    </citation>
    <scope>FUNCTION</scope>
    <scope>SUBUNIT</scope>
</reference>
<reference key="25">
    <citation type="journal article" date="2004" name="Mol. Cell">
        <title>Molecular architecture of the S. cerevisiae SAGA complex.</title>
        <authorList>
            <person name="Wu P.Y."/>
            <person name="Ruhlmann C."/>
            <person name="Winston F."/>
            <person name="Schultz P."/>
        </authorList>
    </citation>
    <scope>3D-STRUCTURE MODELING OF THE SAGA COMPLEX</scope>
</reference>
<keyword id="KW-0156">Chromatin regulator</keyword>
<keyword id="KW-0539">Nucleus</keyword>
<keyword id="KW-0597">Phosphoprotein</keyword>
<keyword id="KW-1185">Reference proteome</keyword>
<keyword id="KW-0804">Transcription</keyword>
<keyword id="KW-0805">Transcription regulation</keyword>
<comment type="function">
    <text evidence="3 5 6 7 9 11 12 13 14">Component of the transcription coactivator SAGA complex. SAGA acts as a general cofactor required for essentially all RNA polymerase II transcription (PubMed:10864329, PubMed:25216679, PubMed:28918903). At the promoters, SAGA is required for transcription pre-initiation complex (PIC) recruitment. It influences RNA polymerase II transcriptional activity through different activities such as TBP interaction (via core/TAF module) and promoter selectivity, interaction with transcription activators (via Tra1/SPT module), and chromatin modification through histone acetylation (via HAT module) and deubiquitination (via DUB module) (PubMed:21734642). SAGA preferentially acetylates histones H3 (to form H3K9ac, H3K14ac, H3K18ac and H3K23ac) and H2B and deubiquitinates histone H2B (PubMed:10026213). SAGA interacts with DNA via upstream activating sequences (UASs) (PubMed:28918903). Also identified in a modified version of SAGA named SALSA or SLIK (PubMed:12186975, PubMed:12446794). The cleavage of SPT7 and the absence of the SPT8 subunit in SLIK neither drive any major conformational differences in its structure compared with SAGA, nor significantly affect HAT, DUB, or DNA-binding activities (PubMed:33864814). Component of the ADA histone acetyltransferase complex, which preferentially acetylates nucleosomal histones H3 (to form H3K14ac and H3K18ac) and H2B (PubMed:10026213). May be involved in response to DNA damage by genotoxic agents (PubMed:15340070).</text>
</comment>
<comment type="subunit">
    <text evidence="4 6 7 10 11 12 14 15 16 17 18 19">Component of the 1.8 MDa SAGA (Spt-Ada-Gcn5 acetyltransferase) complex, which is composed of 19 subunits TRA1, SPT7, TAF5, NGG1/ADA3, SGF73, SPT20/ADA5, SPT8, TAF12, TAF6, HFI1/ADA1, UBP8, GCN5, ADA2, SPT3, SGF29, TAF10, TAF9, SGF11 and SUS1 (PubMed:9674426, PubMed:9885573). The SAGA complex is composed of 4 modules, namely the HAT (histone acetyltransferase) module (GCN5, ADA2, NGG1/ADA3 and SGF29), the DUB (deubiquitinating) module (UBP8, SGF11, SGF73 and SUS1), the core or TAF (TBP-associated factor) module (TAF5, TAF6, TAF9, TAF10 and TAF12), and the Tra1 or SPT (Suppressor of Ty) module (TRA1, HFI1/ADA1, SPT3, SPT7, SPT8 and SPT20/ADA5). The Tra1/SPT module binds activators, the core module recruits TBP (TATA-binding protein), the HAT module contains the histone H3 acetyltransferase GCN5, and the DUB module comprises the histone H2B deubiquitinase UBP8 (PubMed:21734642, PubMed:25216679). Also identified in an altered form of SAGA, named SALSA (SAGA altered, Spt8 absent) or SLIK (SAGA-like) complex, which contains a C-terminal truncated form of SPT7 and is missing SPT8 (PubMed:12186975, PubMed:12446794, PubMed:15647753). However, it has been shown that the SAGA and SAGA-like SALSA/SLIK transcriptional coactivators are structurally and biochemically equivalent (PubMed:33864814). Component of the 0.8 MDa ADA complex, a HAT complex distinct from SAGA, which at least consists of ADA2, NGG1/ADA3, AHC1, AHC2, SGF29 and GCN5 (PubMed:10490601, PubMed:21734642). Identified in an Ada.spt complex with SPT7 and TRA1 (PubMed:9756893). Component of an ADA/GCN5 complex that consists of HFI1/ADA1, ADA2, NGG1/ADA3, SPT20/ADA5 and GCN5 and probably is a subcomplex of SAGA (PubMed:7862114, PubMed:9154821).</text>
</comment>
<comment type="interaction">
    <interactant intactId="EBI-2192">
        <id>P32494</id>
    </interactant>
    <interactant intactId="EBI-2186">
        <id>Q02336</id>
        <label>ADA2</label>
    </interactant>
    <organismsDiffer>false</organismsDiffer>
    <experiments>29</experiments>
</comment>
<comment type="interaction">
    <interactant intactId="EBI-2192">
        <id>P32494</id>
    </interactant>
    <interactant intactId="EBI-8287">
        <id>Q12060</id>
        <label>HFI1</label>
    </interactant>
    <organismsDiffer>false</organismsDiffer>
    <experiments>6</experiments>
</comment>
<comment type="interaction">
    <interactant intactId="EBI-2192">
        <id>P32494</id>
    </interactant>
    <interactant intactId="EBI-21678">
        <id>P25554</id>
        <label>SGF29</label>
    </interactant>
    <organismsDiffer>false</organismsDiffer>
    <experiments>6</experiments>
</comment>
<comment type="interaction">
    <interactant intactId="EBI-2192">
        <id>P32494</id>
    </interactant>
    <interactant intactId="EBI-17964">
        <id>P38915</id>
        <label>SPT8</label>
    </interactant>
    <organismsDiffer>false</organismsDiffer>
    <experiments>8</experiments>
</comment>
<comment type="interaction">
    <interactant intactId="EBI-2192">
        <id>P32494</id>
    </interactant>
    <interactant intactId="EBI-24638">
        <id>P38811</id>
        <label>TRA1</label>
    </interactant>
    <organismsDiffer>false</organismsDiffer>
    <experiments>4</experiments>
</comment>
<comment type="subcellular location">
    <subcellularLocation>
        <location evidence="11">Nucleus</location>
    </subcellularLocation>
</comment>
<comment type="disruption phenotype">
    <text evidence="9">Increased sensitivity to genotoxic agent generated DNA damage.</text>
</comment>
<comment type="miscellaneous">
    <text evidence="8">Present with 2470 molecules/cell in log phase SD medium.</text>
</comment>
<comment type="similarity">
    <text evidence="20">Belongs to the NGG1 family.</text>
</comment>
<gene>
    <name type="primary">NGG1</name>
    <name type="synonym">ADA3</name>
    <name type="synonym">SWI7</name>
    <name type="ordered locus">YDR176W</name>
    <name type="ORF">YD9395.09</name>
</gene>